<accession>P51166</accession>
<accession>Q6GQ54</accession>
<keyword id="KW-0007">Acetylation</keyword>
<keyword id="KW-0067">ATP-binding</keyword>
<keyword id="KW-0090">Biological rhythms</keyword>
<keyword id="KW-0131">Cell cycle</keyword>
<keyword id="KW-0132">Cell division</keyword>
<keyword id="KW-1003">Cell membrane</keyword>
<keyword id="KW-0966">Cell projection</keyword>
<keyword id="KW-0963">Cytoplasm</keyword>
<keyword id="KW-0418">Kinase</keyword>
<keyword id="KW-0472">Membrane</keyword>
<keyword id="KW-0524">Neurogenesis</keyword>
<keyword id="KW-0547">Nucleotide-binding</keyword>
<keyword id="KW-0539">Nucleus</keyword>
<keyword id="KW-0597">Phosphoprotein</keyword>
<keyword id="KW-1185">Reference proteome</keyword>
<keyword id="KW-0723">Serine/threonine-protein kinase</keyword>
<keyword id="KW-0770">Synapse</keyword>
<keyword id="KW-0808">Transferase</keyword>
<dbReference type="EC" id="2.7.11.1"/>
<dbReference type="EMBL" id="U24397">
    <property type="protein sequence ID" value="AAB37091.1"/>
    <property type="molecule type" value="mRNA"/>
</dbReference>
<dbReference type="EMBL" id="BC072894">
    <property type="protein sequence ID" value="AAH72894.1"/>
    <property type="molecule type" value="mRNA"/>
</dbReference>
<dbReference type="RefSeq" id="NP_001084086.1">
    <property type="nucleotide sequence ID" value="NM_001090617.1"/>
</dbReference>
<dbReference type="SMR" id="P51166"/>
<dbReference type="DNASU" id="399296"/>
<dbReference type="GeneID" id="399296"/>
<dbReference type="KEGG" id="xla:399296"/>
<dbReference type="AGR" id="Xenbase:XB-GENE-6254177"/>
<dbReference type="CTD" id="399296"/>
<dbReference type="Xenbase" id="XB-GENE-6254177">
    <property type="gene designation" value="cdk5.L"/>
</dbReference>
<dbReference type="OrthoDB" id="1732493at2759"/>
<dbReference type="BRENDA" id="2.7.11.22">
    <property type="organism ID" value="6725"/>
</dbReference>
<dbReference type="Proteomes" id="UP000186698">
    <property type="component" value="Chromosome 6L"/>
</dbReference>
<dbReference type="Bgee" id="399296">
    <property type="expression patterns" value="Expressed in oocyte and 19 other cell types or tissues"/>
</dbReference>
<dbReference type="GO" id="GO:0030424">
    <property type="term" value="C:axon"/>
    <property type="evidence" value="ECO:0000250"/>
    <property type="project" value="UniProtKB"/>
</dbReference>
<dbReference type="GO" id="GO:0005737">
    <property type="term" value="C:cytoplasm"/>
    <property type="evidence" value="ECO:0000250"/>
    <property type="project" value="UniProtKB"/>
</dbReference>
<dbReference type="GO" id="GO:0030425">
    <property type="term" value="C:dendrite"/>
    <property type="evidence" value="ECO:0000250"/>
    <property type="project" value="UniProtKB"/>
</dbReference>
<dbReference type="GO" id="GO:0030426">
    <property type="term" value="C:growth cone"/>
    <property type="evidence" value="ECO:0000250"/>
    <property type="project" value="UniProtKB"/>
</dbReference>
<dbReference type="GO" id="GO:0030027">
    <property type="term" value="C:lamellipodium"/>
    <property type="evidence" value="ECO:0007669"/>
    <property type="project" value="UniProtKB-SubCell"/>
</dbReference>
<dbReference type="GO" id="GO:0016020">
    <property type="term" value="C:membrane"/>
    <property type="evidence" value="ECO:0000250"/>
    <property type="project" value="UniProtKB"/>
</dbReference>
<dbReference type="GO" id="GO:0031594">
    <property type="term" value="C:neuromuscular junction"/>
    <property type="evidence" value="ECO:0000250"/>
    <property type="project" value="UniProtKB"/>
</dbReference>
<dbReference type="GO" id="GO:0043025">
    <property type="term" value="C:neuronal cell body"/>
    <property type="evidence" value="ECO:0000250"/>
    <property type="project" value="UniProtKB"/>
</dbReference>
<dbReference type="GO" id="GO:0005634">
    <property type="term" value="C:nucleus"/>
    <property type="evidence" value="ECO:0000250"/>
    <property type="project" value="UniProtKB"/>
</dbReference>
<dbReference type="GO" id="GO:0043204">
    <property type="term" value="C:perikaryon"/>
    <property type="evidence" value="ECO:0007669"/>
    <property type="project" value="UniProtKB-SubCell"/>
</dbReference>
<dbReference type="GO" id="GO:0005886">
    <property type="term" value="C:plasma membrane"/>
    <property type="evidence" value="ECO:0007669"/>
    <property type="project" value="UniProtKB-SubCell"/>
</dbReference>
<dbReference type="GO" id="GO:0014069">
    <property type="term" value="C:postsynaptic density"/>
    <property type="evidence" value="ECO:0000250"/>
    <property type="project" value="UniProtKB"/>
</dbReference>
<dbReference type="GO" id="GO:0030549">
    <property type="term" value="F:acetylcholine receptor activator activity"/>
    <property type="evidence" value="ECO:0000250"/>
    <property type="project" value="UniProtKB"/>
</dbReference>
<dbReference type="GO" id="GO:0005524">
    <property type="term" value="F:ATP binding"/>
    <property type="evidence" value="ECO:0007669"/>
    <property type="project" value="UniProtKB-KW"/>
</dbReference>
<dbReference type="GO" id="GO:0004693">
    <property type="term" value="F:cyclin-dependent protein serine/threonine kinase activity"/>
    <property type="evidence" value="ECO:0000318"/>
    <property type="project" value="GO_Central"/>
</dbReference>
<dbReference type="GO" id="GO:0005176">
    <property type="term" value="F:ErbB-2 class receptor binding"/>
    <property type="evidence" value="ECO:0000250"/>
    <property type="project" value="UniProtKB"/>
</dbReference>
<dbReference type="GO" id="GO:0043125">
    <property type="term" value="F:ErbB-3 class receptor binding"/>
    <property type="evidence" value="ECO:0000250"/>
    <property type="project" value="UniProtKB"/>
</dbReference>
<dbReference type="GO" id="GO:0016301">
    <property type="term" value="F:kinase activity"/>
    <property type="evidence" value="ECO:0000250"/>
    <property type="project" value="UniProtKB"/>
</dbReference>
<dbReference type="GO" id="GO:0106310">
    <property type="term" value="F:protein serine kinase activity"/>
    <property type="evidence" value="ECO:0007669"/>
    <property type="project" value="RHEA"/>
</dbReference>
<dbReference type="GO" id="GO:0004674">
    <property type="term" value="F:protein serine/threonine kinase activity"/>
    <property type="evidence" value="ECO:0000250"/>
    <property type="project" value="UniProtKB"/>
</dbReference>
<dbReference type="GO" id="GO:0050321">
    <property type="term" value="F:tau-protein kinase activity"/>
    <property type="evidence" value="ECO:0000250"/>
    <property type="project" value="UniProtKB"/>
</dbReference>
<dbReference type="GO" id="GO:0007409">
    <property type="term" value="P:axonogenesis"/>
    <property type="evidence" value="ECO:0000318"/>
    <property type="project" value="GO_Central"/>
</dbReference>
<dbReference type="GO" id="GO:0051301">
    <property type="term" value="P:cell division"/>
    <property type="evidence" value="ECO:0007669"/>
    <property type="project" value="UniProtKB-KW"/>
</dbReference>
<dbReference type="GO" id="GO:0051402">
    <property type="term" value="P:neuron apoptotic process"/>
    <property type="evidence" value="ECO:0000318"/>
    <property type="project" value="GO_Central"/>
</dbReference>
<dbReference type="GO" id="GO:0030182">
    <property type="term" value="P:neuron differentiation"/>
    <property type="evidence" value="ECO:0000250"/>
    <property type="project" value="UniProtKB"/>
</dbReference>
<dbReference type="GO" id="GO:0031175">
    <property type="term" value="P:neuron projection development"/>
    <property type="evidence" value="ECO:0000250"/>
    <property type="project" value="UniProtKB"/>
</dbReference>
<dbReference type="GO" id="GO:0043525">
    <property type="term" value="P:positive regulation of neuron apoptotic process"/>
    <property type="evidence" value="ECO:0000250"/>
    <property type="project" value="UniProtKB"/>
</dbReference>
<dbReference type="GO" id="GO:1901987">
    <property type="term" value="P:regulation of cell cycle phase transition"/>
    <property type="evidence" value="ECO:0000318"/>
    <property type="project" value="GO_Central"/>
</dbReference>
<dbReference type="GO" id="GO:0061001">
    <property type="term" value="P:regulation of dendritic spine morphogenesis"/>
    <property type="evidence" value="ECO:0000250"/>
    <property type="project" value="UniProtKB"/>
</dbReference>
<dbReference type="GO" id="GO:0048511">
    <property type="term" value="P:rhythmic process"/>
    <property type="evidence" value="ECO:0007669"/>
    <property type="project" value="UniProtKB-KW"/>
</dbReference>
<dbReference type="GO" id="GO:0048489">
    <property type="term" value="P:synaptic vesicle transport"/>
    <property type="evidence" value="ECO:0000318"/>
    <property type="project" value="GO_Central"/>
</dbReference>
<dbReference type="CDD" id="cd07839">
    <property type="entry name" value="STKc_CDK5"/>
    <property type="match status" value="1"/>
</dbReference>
<dbReference type="FunFam" id="3.30.200.20:FF:000144">
    <property type="entry name" value="Cyclin-dependent kinase 5"/>
    <property type="match status" value="1"/>
</dbReference>
<dbReference type="FunFam" id="1.10.510.10:FF:000184">
    <property type="entry name" value="cyclin-dependent kinase 5 homolog"/>
    <property type="match status" value="1"/>
</dbReference>
<dbReference type="Gene3D" id="3.30.200.20">
    <property type="entry name" value="Phosphorylase Kinase, domain 1"/>
    <property type="match status" value="1"/>
</dbReference>
<dbReference type="Gene3D" id="1.10.510.10">
    <property type="entry name" value="Transferase(Phosphotransferase) domain 1"/>
    <property type="match status" value="1"/>
</dbReference>
<dbReference type="InterPro" id="IPR050108">
    <property type="entry name" value="CDK"/>
</dbReference>
<dbReference type="InterPro" id="IPR011009">
    <property type="entry name" value="Kinase-like_dom_sf"/>
</dbReference>
<dbReference type="InterPro" id="IPR000719">
    <property type="entry name" value="Prot_kinase_dom"/>
</dbReference>
<dbReference type="InterPro" id="IPR017441">
    <property type="entry name" value="Protein_kinase_ATP_BS"/>
</dbReference>
<dbReference type="InterPro" id="IPR008271">
    <property type="entry name" value="Ser/Thr_kinase_AS"/>
</dbReference>
<dbReference type="PANTHER" id="PTHR24056">
    <property type="entry name" value="CELL DIVISION PROTEIN KINASE"/>
    <property type="match status" value="1"/>
</dbReference>
<dbReference type="PANTHER" id="PTHR24056:SF46">
    <property type="entry name" value="CYCLIN-DEPENDENT KINASE 5"/>
    <property type="match status" value="1"/>
</dbReference>
<dbReference type="Pfam" id="PF00069">
    <property type="entry name" value="Pkinase"/>
    <property type="match status" value="1"/>
</dbReference>
<dbReference type="SMART" id="SM00220">
    <property type="entry name" value="S_TKc"/>
    <property type="match status" value="1"/>
</dbReference>
<dbReference type="SUPFAM" id="SSF56112">
    <property type="entry name" value="Protein kinase-like (PK-like)"/>
    <property type="match status" value="1"/>
</dbReference>
<dbReference type="PROSITE" id="PS00107">
    <property type="entry name" value="PROTEIN_KINASE_ATP"/>
    <property type="match status" value="1"/>
</dbReference>
<dbReference type="PROSITE" id="PS50011">
    <property type="entry name" value="PROTEIN_KINASE_DOM"/>
    <property type="match status" value="1"/>
</dbReference>
<dbReference type="PROSITE" id="PS00108">
    <property type="entry name" value="PROTEIN_KINASE_ST"/>
    <property type="match status" value="1"/>
</dbReference>
<comment type="function">
    <text>Proline-directed serine/threonine-protein kinase essential for neuronal cell cycle arrest and differentiation and may be involved in apoptotic cell death in neuronal diseases by triggering abortive cell cycle re-entry. Interacts with D1 and D3-type G1 cyclins. Regulates several neuronal development and physiological processes including neuronal survival, migration and differentiation, axonal and neurite growth, synaptogenesis, oligodendrocyte differentiation, synaptic plasticity and neurotransmission, by phosphorylating key proteins. In the mature central nervous system (CNS), regulates neurotransmitter movements by phosphorylating substrates associated with neurotransmitter release and synapse plasticity; synaptic vesicle exocytosis, vesicles fusion with the presynaptic membrane, and endocytosis. May regulate endothelial cell migration and angiogenesis via the modulation of lamellipodia formation. The complex p35/CDK5 may participate in the regulation of the circadian clock.</text>
</comment>
<comment type="catalytic activity">
    <reaction>
        <text>L-seryl-[protein] + ATP = O-phospho-L-seryl-[protein] + ADP + H(+)</text>
        <dbReference type="Rhea" id="RHEA:17989"/>
        <dbReference type="Rhea" id="RHEA-COMP:9863"/>
        <dbReference type="Rhea" id="RHEA-COMP:11604"/>
        <dbReference type="ChEBI" id="CHEBI:15378"/>
        <dbReference type="ChEBI" id="CHEBI:29999"/>
        <dbReference type="ChEBI" id="CHEBI:30616"/>
        <dbReference type="ChEBI" id="CHEBI:83421"/>
        <dbReference type="ChEBI" id="CHEBI:456216"/>
        <dbReference type="EC" id="2.7.11.1"/>
    </reaction>
</comment>
<comment type="catalytic activity">
    <reaction>
        <text>L-threonyl-[protein] + ATP = O-phospho-L-threonyl-[protein] + ADP + H(+)</text>
        <dbReference type="Rhea" id="RHEA:46608"/>
        <dbReference type="Rhea" id="RHEA-COMP:11060"/>
        <dbReference type="Rhea" id="RHEA-COMP:11605"/>
        <dbReference type="ChEBI" id="CHEBI:15378"/>
        <dbReference type="ChEBI" id="CHEBI:30013"/>
        <dbReference type="ChEBI" id="CHEBI:30616"/>
        <dbReference type="ChEBI" id="CHEBI:61977"/>
        <dbReference type="ChEBI" id="CHEBI:456216"/>
        <dbReference type="EC" id="2.7.11.1"/>
    </reaction>
</comment>
<comment type="subcellular location">
    <subcellularLocation>
        <location evidence="1">Nucleus</location>
    </subcellularLocation>
    <subcellularLocation>
        <location evidence="1">Cytoplasm</location>
    </subcellularLocation>
    <subcellularLocation>
        <location evidence="1">Cell membrane</location>
        <topology evidence="1">Peripheral membrane protein</topology>
    </subcellularLocation>
    <subcellularLocation>
        <location evidence="1">Perikaryon</location>
    </subcellularLocation>
    <subcellularLocation>
        <location evidence="1">Cell projection</location>
        <location evidence="1">Growth cone</location>
    </subcellularLocation>
    <subcellularLocation>
        <location evidence="1">Cell projection</location>
        <location evidence="1">Lamellipodium</location>
    </subcellularLocation>
    <subcellularLocation>
        <location evidence="1">Postsynaptic density</location>
    </subcellularLocation>
</comment>
<comment type="similarity">
    <text evidence="4">Belongs to the protein kinase superfamily. CMGC Ser/Thr protein kinase family. CDC2/CDKX subfamily.</text>
</comment>
<reference key="1">
    <citation type="journal article" date="1995" name="Brain Res. Mol. Brain Res.">
        <title>The Xenopus laevis homologue to the neuronal cyclin-dependent kinase (cdk5) is expressed in embryos by gastrulation.</title>
        <authorList>
            <person name="Gervasi C."/>
            <person name="Szaro B.G."/>
        </authorList>
    </citation>
    <scope>NUCLEOTIDE SEQUENCE [MRNA]</scope>
    <source>
        <strain>Periodic albino</strain>
        <tissue>Brain</tissue>
    </source>
</reference>
<reference key="2">
    <citation type="submission" date="2004-06" db="EMBL/GenBank/DDBJ databases">
        <authorList>
            <consortium name="NIH - Xenopus Gene Collection (XGC) project"/>
        </authorList>
    </citation>
    <scope>NUCLEOTIDE SEQUENCE [LARGE SCALE MRNA]</scope>
    <source>
        <tissue>Ovary</tissue>
    </source>
</reference>
<organism>
    <name type="scientific">Xenopus laevis</name>
    <name type="common">African clawed frog</name>
    <dbReference type="NCBI Taxonomy" id="8355"/>
    <lineage>
        <taxon>Eukaryota</taxon>
        <taxon>Metazoa</taxon>
        <taxon>Chordata</taxon>
        <taxon>Craniata</taxon>
        <taxon>Vertebrata</taxon>
        <taxon>Euteleostomi</taxon>
        <taxon>Amphibia</taxon>
        <taxon>Batrachia</taxon>
        <taxon>Anura</taxon>
        <taxon>Pipoidea</taxon>
        <taxon>Pipidae</taxon>
        <taxon>Xenopodinae</taxon>
        <taxon>Xenopus</taxon>
        <taxon>Xenopus</taxon>
    </lineage>
</organism>
<name>CDK5_XENLA</name>
<protein>
    <recommendedName>
        <fullName>Cyclin-dependent-like kinase 5</fullName>
        <ecNumber>2.7.11.1</ecNumber>
    </recommendedName>
    <alternativeName>
        <fullName>Cell division protein kinase 5</fullName>
    </alternativeName>
    <alternativeName>
        <fullName>Neuronal cyclin-dependent kinase 5</fullName>
    </alternativeName>
</protein>
<proteinExistence type="evidence at transcript level"/>
<evidence type="ECO:0000250" key="1"/>
<evidence type="ECO:0000255" key="2">
    <source>
        <dbReference type="PROSITE-ProRule" id="PRU00159"/>
    </source>
</evidence>
<evidence type="ECO:0000255" key="3">
    <source>
        <dbReference type="PROSITE-ProRule" id="PRU10027"/>
    </source>
</evidence>
<evidence type="ECO:0000305" key="4"/>
<gene>
    <name type="primary">cdk5</name>
</gene>
<sequence>MQKYEKLEKIGEGTYGTVFKAKNRDTHEIVALKRVRLDDDDEGVPSSALREICLLKELKHKNIVRLHDVLHSDKKLTLVFEFCDQDLKKYFDSCNGDLDPEIVKSFMYQLLKGLAFCHSRNVLHRDLKPQNLLINRNGELKLADFGLARAFGIPVRCYSAEVVTLWYRPPDVLFGAKLYSTSIDMWSAGCIFAELANAGRPLFPGNDVDDQLKRIFRLLGTPTEEQWPAMTKLPDYKPYPMYPATMSLVNVVPKLNATGRDLLQNLLKCNPVQRICADEALQHPYFADFCPP</sequence>
<feature type="chain" id="PRO_0000085787" description="Cyclin-dependent-like kinase 5">
    <location>
        <begin position="1"/>
        <end position="292"/>
    </location>
</feature>
<feature type="domain" description="Protein kinase" evidence="2">
    <location>
        <begin position="4"/>
        <end position="286"/>
    </location>
</feature>
<feature type="active site" description="Proton acceptor" evidence="2 3">
    <location>
        <position position="126"/>
    </location>
</feature>
<feature type="binding site" evidence="2">
    <location>
        <begin position="10"/>
        <end position="18"/>
    </location>
    <ligand>
        <name>ATP</name>
        <dbReference type="ChEBI" id="CHEBI:30616"/>
    </ligand>
</feature>
<feature type="binding site" evidence="2">
    <location>
        <position position="33"/>
    </location>
    <ligand>
        <name>ATP</name>
        <dbReference type="ChEBI" id="CHEBI:30616"/>
    </ligand>
</feature>
<feature type="modified residue" description="Phosphothreonine" evidence="1">
    <location>
        <position position="14"/>
    </location>
</feature>
<feature type="modified residue" description="Phosphotyrosine" evidence="1">
    <location>
        <position position="15"/>
    </location>
</feature>
<feature type="modified residue" description="Phosphothreonine" evidence="1">
    <location>
        <position position="17"/>
    </location>
</feature>
<feature type="modified residue" description="Phosphoserine" evidence="1">
    <location>
        <position position="46"/>
    </location>
</feature>
<feature type="modified residue" description="N6-acetyllysine" evidence="1">
    <location>
        <position position="56"/>
    </location>
</feature>
<feature type="modified residue" description="Phosphoserine" evidence="1">
    <location>
        <position position="72"/>
    </location>
</feature>
<feature type="modified residue" description="Phosphoserine" evidence="1">
    <location>
        <position position="159"/>
    </location>
</feature>
<feature type="modified residue" description="Phosphotyrosine" evidence="1">
    <location>
        <position position="239"/>
    </location>
</feature>